<accession>P43363</accession>
<organism>
    <name type="scientific">Homo sapiens</name>
    <name type="common">Human</name>
    <dbReference type="NCBI Taxonomy" id="9606"/>
    <lineage>
        <taxon>Eukaryota</taxon>
        <taxon>Metazoa</taxon>
        <taxon>Chordata</taxon>
        <taxon>Craniata</taxon>
        <taxon>Vertebrata</taxon>
        <taxon>Euteleostomi</taxon>
        <taxon>Mammalia</taxon>
        <taxon>Eutheria</taxon>
        <taxon>Euarchontoglires</taxon>
        <taxon>Primates</taxon>
        <taxon>Haplorrhini</taxon>
        <taxon>Catarrhini</taxon>
        <taxon>Hominidae</taxon>
        <taxon>Homo</taxon>
    </lineage>
</organism>
<dbReference type="EMBL" id="U10685">
    <property type="protein sequence ID" value="AAA68869.1"/>
    <property type="molecule type" value="Genomic_DNA"/>
</dbReference>
<dbReference type="EMBL" id="AC116666">
    <property type="status" value="NOT_ANNOTATED_CDS"/>
    <property type="molecule type" value="Genomic_DNA"/>
</dbReference>
<dbReference type="EMBL" id="BC004105">
    <property type="protein sequence ID" value="AAH04105.1"/>
    <property type="molecule type" value="mRNA"/>
</dbReference>
<dbReference type="CCDS" id="CCDS14705.1"/>
<dbReference type="PIR" id="I38659">
    <property type="entry name" value="I38659"/>
</dbReference>
<dbReference type="RefSeq" id="NP_001011543.3">
    <property type="nucleotide sequence ID" value="NM_001011543.3"/>
</dbReference>
<dbReference type="RefSeq" id="NP_001238757.2">
    <property type="nucleotide sequence ID" value="NM_001251828.2"/>
</dbReference>
<dbReference type="RefSeq" id="NP_066386.3">
    <property type="nucleotide sequence ID" value="NM_021048.5"/>
</dbReference>
<dbReference type="PDB" id="7PBC">
    <property type="method" value="X-ray"/>
    <property type="resolution" value="2.04 A"/>
    <property type="chains" value="EEE=254-262"/>
</dbReference>
<dbReference type="PDB" id="7PDW">
    <property type="method" value="X-ray"/>
    <property type="resolution" value="1.82 A"/>
    <property type="chains" value="EEE/JJJ=254-262"/>
</dbReference>
<dbReference type="PDB" id="7QPJ">
    <property type="method" value="X-ray"/>
    <property type="resolution" value="1.54 A"/>
    <property type="chains" value="E=254-262"/>
</dbReference>
<dbReference type="PDBsum" id="7PBC"/>
<dbReference type="PDBsum" id="7PDW"/>
<dbReference type="PDBsum" id="7QPJ"/>
<dbReference type="SMR" id="P43363"/>
<dbReference type="BioGRID" id="110283">
    <property type="interactions" value="104"/>
</dbReference>
<dbReference type="FunCoup" id="P43363">
    <property type="interactions" value="121"/>
</dbReference>
<dbReference type="IntAct" id="P43363">
    <property type="interactions" value="44"/>
</dbReference>
<dbReference type="MINT" id="P43363"/>
<dbReference type="STRING" id="9606.ENSP00000244096"/>
<dbReference type="GlyGen" id="P43363">
    <property type="glycosylation" value="1 site, 1 O-linked glycan (1 site)"/>
</dbReference>
<dbReference type="iPTMnet" id="P43363"/>
<dbReference type="PhosphoSitePlus" id="P43363"/>
<dbReference type="BioMuta" id="MAGEA10"/>
<dbReference type="DMDM" id="317373386"/>
<dbReference type="jPOST" id="P43363"/>
<dbReference type="MassIVE" id="P43363"/>
<dbReference type="PaxDb" id="9606-ENSP00000244096"/>
<dbReference type="PeptideAtlas" id="P43363"/>
<dbReference type="ProteomicsDB" id="55625"/>
<dbReference type="TopDownProteomics" id="P43363"/>
<dbReference type="Antibodypedia" id="30725">
    <property type="antibodies" value="208 antibodies from 26 providers"/>
</dbReference>
<dbReference type="DNASU" id="4109"/>
<dbReference type="Ensembl" id="ENST00000244096.7">
    <property type="protein sequence ID" value="ENSP00000244096.3"/>
    <property type="gene ID" value="ENSG00000124260.12"/>
</dbReference>
<dbReference type="Ensembl" id="ENST00000370323.9">
    <property type="protein sequence ID" value="ENSP00000359347.4"/>
    <property type="gene ID" value="ENSG00000124260.12"/>
</dbReference>
<dbReference type="GeneID" id="4109"/>
<dbReference type="KEGG" id="hsa:4109"/>
<dbReference type="MANE-Select" id="ENST00000370323.9">
    <property type="protein sequence ID" value="ENSP00000359347.4"/>
    <property type="RefSeq nucleotide sequence ID" value="NM_021048.5"/>
    <property type="RefSeq protein sequence ID" value="NP_066386.3"/>
</dbReference>
<dbReference type="UCSC" id="uc004ffk.4">
    <property type="organism name" value="human"/>
</dbReference>
<dbReference type="AGR" id="HGNC:6797"/>
<dbReference type="CTD" id="4109"/>
<dbReference type="DisGeNET" id="4109"/>
<dbReference type="GeneCards" id="MAGEA10"/>
<dbReference type="HGNC" id="HGNC:6797">
    <property type="gene designation" value="MAGEA10"/>
</dbReference>
<dbReference type="HPA" id="ENSG00000124260">
    <property type="expression patterns" value="Group enriched (placenta, testis)"/>
</dbReference>
<dbReference type="MIM" id="300343">
    <property type="type" value="gene"/>
</dbReference>
<dbReference type="neXtProt" id="NX_P43363"/>
<dbReference type="OpenTargets" id="ENSG00000124260"/>
<dbReference type="PharmGKB" id="PA30543"/>
<dbReference type="VEuPathDB" id="HostDB:ENSG00000124260"/>
<dbReference type="eggNOG" id="KOG4562">
    <property type="taxonomic scope" value="Eukaryota"/>
</dbReference>
<dbReference type="GeneTree" id="ENSGT00940000154972"/>
<dbReference type="HOGENOM" id="CLU_039582_1_1_1"/>
<dbReference type="InParanoid" id="P43363"/>
<dbReference type="OMA" id="DGMEHFI"/>
<dbReference type="OrthoDB" id="205198at2759"/>
<dbReference type="PAN-GO" id="P43363">
    <property type="GO annotations" value="3 GO annotations based on evolutionary models"/>
</dbReference>
<dbReference type="PhylomeDB" id="P43363"/>
<dbReference type="TreeFam" id="TF328505"/>
<dbReference type="PathwayCommons" id="P43363"/>
<dbReference type="SignaLink" id="P43363"/>
<dbReference type="BioGRID-ORCS" id="4109">
    <property type="hits" value="8 hits in 761 CRISPR screens"/>
</dbReference>
<dbReference type="ChiTaRS" id="MAGEA10">
    <property type="organism name" value="human"/>
</dbReference>
<dbReference type="GenomeRNAi" id="4109"/>
<dbReference type="Pharos" id="P43363">
    <property type="development level" value="Tbio"/>
</dbReference>
<dbReference type="PRO" id="PR:P43363"/>
<dbReference type="Proteomes" id="UP000005640">
    <property type="component" value="Chromosome X"/>
</dbReference>
<dbReference type="RNAct" id="P43363">
    <property type="molecule type" value="protein"/>
</dbReference>
<dbReference type="Bgee" id="ENSG00000124260">
    <property type="expression patterns" value="Expressed in male germ line stem cell (sensu Vertebrata) in testis and 11 other cell types or tissues"/>
</dbReference>
<dbReference type="ExpressionAtlas" id="P43363">
    <property type="expression patterns" value="baseline and differential"/>
</dbReference>
<dbReference type="GO" id="GO:0005829">
    <property type="term" value="C:cytosol"/>
    <property type="evidence" value="ECO:0000314"/>
    <property type="project" value="HPA"/>
</dbReference>
<dbReference type="GO" id="GO:0005654">
    <property type="term" value="C:nucleoplasm"/>
    <property type="evidence" value="ECO:0000314"/>
    <property type="project" value="HPA"/>
</dbReference>
<dbReference type="GO" id="GO:0005634">
    <property type="term" value="C:nucleus"/>
    <property type="evidence" value="ECO:0000318"/>
    <property type="project" value="GO_Central"/>
</dbReference>
<dbReference type="GO" id="GO:0042826">
    <property type="term" value="F:histone deacetylase binding"/>
    <property type="evidence" value="ECO:0000318"/>
    <property type="project" value="GO_Central"/>
</dbReference>
<dbReference type="GO" id="GO:0000122">
    <property type="term" value="P:negative regulation of transcription by RNA polymerase II"/>
    <property type="evidence" value="ECO:0000318"/>
    <property type="project" value="GO_Central"/>
</dbReference>
<dbReference type="FunFam" id="1.10.10.1200:FF:000002">
    <property type="entry name" value="MAGE family member A11"/>
    <property type="match status" value="1"/>
</dbReference>
<dbReference type="FunFam" id="1.10.10.1210:FF:000001">
    <property type="entry name" value="melanoma-associated antigen D1"/>
    <property type="match status" value="1"/>
</dbReference>
<dbReference type="Gene3D" id="1.10.10.1200">
    <property type="entry name" value="MAGE homology domain, winged helix WH1 motif"/>
    <property type="match status" value="1"/>
</dbReference>
<dbReference type="Gene3D" id="1.10.10.1210">
    <property type="entry name" value="MAGE homology domain, winged helix WH2 motif"/>
    <property type="match status" value="1"/>
</dbReference>
<dbReference type="InterPro" id="IPR037445">
    <property type="entry name" value="MAGE"/>
</dbReference>
<dbReference type="InterPro" id="IPR021072">
    <property type="entry name" value="MAGE_N"/>
</dbReference>
<dbReference type="InterPro" id="IPR041898">
    <property type="entry name" value="MAGE_WH1"/>
</dbReference>
<dbReference type="InterPro" id="IPR041899">
    <property type="entry name" value="MAGE_WH2"/>
</dbReference>
<dbReference type="InterPro" id="IPR002190">
    <property type="entry name" value="MHD_dom"/>
</dbReference>
<dbReference type="PANTHER" id="PTHR11736:SF153">
    <property type="entry name" value="MELANOMA-ASSOCIATED ANTIGEN 10"/>
    <property type="match status" value="1"/>
</dbReference>
<dbReference type="PANTHER" id="PTHR11736">
    <property type="entry name" value="MELANOMA-ASSOCIATED ANTIGEN MAGE ANTIGEN"/>
    <property type="match status" value="1"/>
</dbReference>
<dbReference type="Pfam" id="PF01454">
    <property type="entry name" value="MAGE"/>
    <property type="match status" value="1"/>
</dbReference>
<dbReference type="Pfam" id="PF12440">
    <property type="entry name" value="MAGE_N"/>
    <property type="match status" value="1"/>
</dbReference>
<dbReference type="SMART" id="SM01373">
    <property type="entry name" value="MAGE"/>
    <property type="match status" value="1"/>
</dbReference>
<dbReference type="SMART" id="SM01392">
    <property type="entry name" value="MAGE_N"/>
    <property type="match status" value="1"/>
</dbReference>
<dbReference type="PROSITE" id="PS50838">
    <property type="entry name" value="MAGE"/>
    <property type="match status" value="1"/>
</dbReference>
<protein>
    <recommendedName>
        <fullName>Melanoma-associated antigen 10</fullName>
    </recommendedName>
    <alternativeName>
        <fullName>Cancer/testis antigen 1.10</fullName>
        <shortName>CT1.10</shortName>
    </alternativeName>
    <alternativeName>
        <fullName>MAGE-10 antigen</fullName>
    </alternativeName>
</protein>
<sequence length="369" mass="40780">MPRAPKRQRCMPEEDLQSQSETQGLEGAQAPLAVEEDASSSTSTSSSFPSSFPSSSSSSSSSCYPLIPSTPEEVSADDETPNPPQSAQIACSSPSVVASLPLDQSDEGSSSQKEESPSTLQVLPDSESLPRSEIDEKVTDLVQFLLFKYQMKEPITKAEILESVIRNYEDHFPLLFSEASECMLLVFGIDVKEVDPTGHSFVLVTSLGLTYDGMLSDVQSMPKTGILILILSIVFIEGYCTPEEVIWEALNMMGLYDGMEHLIYGEPRKLLTQDWVQENYLEYRQVPGSDPARYEFLWGPRAHAEIRKMSLLKFLAKVNGSDPRSFPLWYEEALKDEEERAQDRIATTDDTTAMASASSSATGSFSYPE</sequence>
<gene>
    <name type="primary">MAGEA10</name>
    <name type="synonym">MAGE10</name>
</gene>
<keyword id="KW-0002">3D-structure</keyword>
<keyword id="KW-0539">Nucleus</keyword>
<keyword id="KW-1267">Proteomics identification</keyword>
<keyword id="KW-1185">Reference proteome</keyword>
<keyword id="KW-0825">Tumor antigen</keyword>
<reference key="1">
    <citation type="journal article" date="1994" name="Immunogenetics">
        <title>Structure, chromosomal localization, and expression of 12 genes of the MAGE family.</title>
        <authorList>
            <person name="De Plaen E."/>
            <person name="Arden K."/>
            <person name="Traversari C."/>
            <person name="Gaforio J.J."/>
            <person name="Szikora J.-P."/>
            <person name="De Smet C."/>
            <person name="Brasseur F."/>
            <person name="van der Bruggen P."/>
            <person name="Lethe B.G."/>
            <person name="Lurquin C."/>
            <person name="Brasseur R."/>
            <person name="Chomez P."/>
            <person name="de Backer O."/>
            <person name="Cavenee W."/>
            <person name="Boon T."/>
        </authorList>
    </citation>
    <scope>NUCLEOTIDE SEQUENCE [GENOMIC DNA]</scope>
    <scope>VARIANTS LYS-166 AND ILE-234</scope>
</reference>
<reference key="2">
    <citation type="journal article" date="2005" name="Nature">
        <title>The DNA sequence of the human X chromosome.</title>
        <authorList>
            <person name="Ross M.T."/>
            <person name="Grafham D.V."/>
            <person name="Coffey A.J."/>
            <person name="Scherer S."/>
            <person name="McLay K."/>
            <person name="Muzny D."/>
            <person name="Platzer M."/>
            <person name="Howell G.R."/>
            <person name="Burrows C."/>
            <person name="Bird C.P."/>
            <person name="Frankish A."/>
            <person name="Lovell F.L."/>
            <person name="Howe K.L."/>
            <person name="Ashurst J.L."/>
            <person name="Fulton R.S."/>
            <person name="Sudbrak R."/>
            <person name="Wen G."/>
            <person name="Jones M.C."/>
            <person name="Hurles M.E."/>
            <person name="Andrews T.D."/>
            <person name="Scott C.E."/>
            <person name="Searle S."/>
            <person name="Ramser J."/>
            <person name="Whittaker A."/>
            <person name="Deadman R."/>
            <person name="Carter N.P."/>
            <person name="Hunt S.E."/>
            <person name="Chen R."/>
            <person name="Cree A."/>
            <person name="Gunaratne P."/>
            <person name="Havlak P."/>
            <person name="Hodgson A."/>
            <person name="Metzker M.L."/>
            <person name="Richards S."/>
            <person name="Scott G."/>
            <person name="Steffen D."/>
            <person name="Sodergren E."/>
            <person name="Wheeler D.A."/>
            <person name="Worley K.C."/>
            <person name="Ainscough R."/>
            <person name="Ambrose K.D."/>
            <person name="Ansari-Lari M.A."/>
            <person name="Aradhya S."/>
            <person name="Ashwell R.I."/>
            <person name="Babbage A.K."/>
            <person name="Bagguley C.L."/>
            <person name="Ballabio A."/>
            <person name="Banerjee R."/>
            <person name="Barker G.E."/>
            <person name="Barlow K.F."/>
            <person name="Barrett I.P."/>
            <person name="Bates K.N."/>
            <person name="Beare D.M."/>
            <person name="Beasley H."/>
            <person name="Beasley O."/>
            <person name="Beck A."/>
            <person name="Bethel G."/>
            <person name="Blechschmidt K."/>
            <person name="Brady N."/>
            <person name="Bray-Allen S."/>
            <person name="Bridgeman A.M."/>
            <person name="Brown A.J."/>
            <person name="Brown M.J."/>
            <person name="Bonnin D."/>
            <person name="Bruford E.A."/>
            <person name="Buhay C."/>
            <person name="Burch P."/>
            <person name="Burford D."/>
            <person name="Burgess J."/>
            <person name="Burrill W."/>
            <person name="Burton J."/>
            <person name="Bye J.M."/>
            <person name="Carder C."/>
            <person name="Carrel L."/>
            <person name="Chako J."/>
            <person name="Chapman J.C."/>
            <person name="Chavez D."/>
            <person name="Chen E."/>
            <person name="Chen G."/>
            <person name="Chen Y."/>
            <person name="Chen Z."/>
            <person name="Chinault C."/>
            <person name="Ciccodicola A."/>
            <person name="Clark S.Y."/>
            <person name="Clarke G."/>
            <person name="Clee C.M."/>
            <person name="Clegg S."/>
            <person name="Clerc-Blankenburg K."/>
            <person name="Clifford K."/>
            <person name="Cobley V."/>
            <person name="Cole C.G."/>
            <person name="Conquer J.S."/>
            <person name="Corby N."/>
            <person name="Connor R.E."/>
            <person name="David R."/>
            <person name="Davies J."/>
            <person name="Davis C."/>
            <person name="Davis J."/>
            <person name="Delgado O."/>
            <person name="Deshazo D."/>
            <person name="Dhami P."/>
            <person name="Ding Y."/>
            <person name="Dinh H."/>
            <person name="Dodsworth S."/>
            <person name="Draper H."/>
            <person name="Dugan-Rocha S."/>
            <person name="Dunham A."/>
            <person name="Dunn M."/>
            <person name="Durbin K.J."/>
            <person name="Dutta I."/>
            <person name="Eades T."/>
            <person name="Ellwood M."/>
            <person name="Emery-Cohen A."/>
            <person name="Errington H."/>
            <person name="Evans K.L."/>
            <person name="Faulkner L."/>
            <person name="Francis F."/>
            <person name="Frankland J."/>
            <person name="Fraser A.E."/>
            <person name="Galgoczy P."/>
            <person name="Gilbert J."/>
            <person name="Gill R."/>
            <person name="Gloeckner G."/>
            <person name="Gregory S.G."/>
            <person name="Gribble S."/>
            <person name="Griffiths C."/>
            <person name="Grocock R."/>
            <person name="Gu Y."/>
            <person name="Gwilliam R."/>
            <person name="Hamilton C."/>
            <person name="Hart E.A."/>
            <person name="Hawes A."/>
            <person name="Heath P.D."/>
            <person name="Heitmann K."/>
            <person name="Hennig S."/>
            <person name="Hernandez J."/>
            <person name="Hinzmann B."/>
            <person name="Ho S."/>
            <person name="Hoffs M."/>
            <person name="Howden P.J."/>
            <person name="Huckle E.J."/>
            <person name="Hume J."/>
            <person name="Hunt P.J."/>
            <person name="Hunt A.R."/>
            <person name="Isherwood J."/>
            <person name="Jacob L."/>
            <person name="Johnson D."/>
            <person name="Jones S."/>
            <person name="de Jong P.J."/>
            <person name="Joseph S.S."/>
            <person name="Keenan S."/>
            <person name="Kelly S."/>
            <person name="Kershaw J.K."/>
            <person name="Khan Z."/>
            <person name="Kioschis P."/>
            <person name="Klages S."/>
            <person name="Knights A.J."/>
            <person name="Kosiura A."/>
            <person name="Kovar-Smith C."/>
            <person name="Laird G.K."/>
            <person name="Langford C."/>
            <person name="Lawlor S."/>
            <person name="Leversha M."/>
            <person name="Lewis L."/>
            <person name="Liu W."/>
            <person name="Lloyd C."/>
            <person name="Lloyd D.M."/>
            <person name="Loulseged H."/>
            <person name="Loveland J.E."/>
            <person name="Lovell J.D."/>
            <person name="Lozado R."/>
            <person name="Lu J."/>
            <person name="Lyne R."/>
            <person name="Ma J."/>
            <person name="Maheshwari M."/>
            <person name="Matthews L.H."/>
            <person name="McDowall J."/>
            <person name="McLaren S."/>
            <person name="McMurray A."/>
            <person name="Meidl P."/>
            <person name="Meitinger T."/>
            <person name="Milne S."/>
            <person name="Miner G."/>
            <person name="Mistry S.L."/>
            <person name="Morgan M."/>
            <person name="Morris S."/>
            <person name="Mueller I."/>
            <person name="Mullikin J.C."/>
            <person name="Nguyen N."/>
            <person name="Nordsiek G."/>
            <person name="Nyakatura G."/>
            <person name="O'dell C.N."/>
            <person name="Okwuonu G."/>
            <person name="Palmer S."/>
            <person name="Pandian R."/>
            <person name="Parker D."/>
            <person name="Parrish J."/>
            <person name="Pasternak S."/>
            <person name="Patel D."/>
            <person name="Pearce A.V."/>
            <person name="Pearson D.M."/>
            <person name="Pelan S.E."/>
            <person name="Perez L."/>
            <person name="Porter K.M."/>
            <person name="Ramsey Y."/>
            <person name="Reichwald K."/>
            <person name="Rhodes S."/>
            <person name="Ridler K.A."/>
            <person name="Schlessinger D."/>
            <person name="Schueler M.G."/>
            <person name="Sehra H.K."/>
            <person name="Shaw-Smith C."/>
            <person name="Shen H."/>
            <person name="Sheridan E.M."/>
            <person name="Shownkeen R."/>
            <person name="Skuce C.D."/>
            <person name="Smith M.L."/>
            <person name="Sotheran E.C."/>
            <person name="Steingruber H.E."/>
            <person name="Steward C.A."/>
            <person name="Storey R."/>
            <person name="Swann R.M."/>
            <person name="Swarbreck D."/>
            <person name="Tabor P.E."/>
            <person name="Taudien S."/>
            <person name="Taylor T."/>
            <person name="Teague B."/>
            <person name="Thomas K."/>
            <person name="Thorpe A."/>
            <person name="Timms K."/>
            <person name="Tracey A."/>
            <person name="Trevanion S."/>
            <person name="Tromans A.C."/>
            <person name="d'Urso M."/>
            <person name="Verduzco D."/>
            <person name="Villasana D."/>
            <person name="Waldron L."/>
            <person name="Wall M."/>
            <person name="Wang Q."/>
            <person name="Warren J."/>
            <person name="Warry G.L."/>
            <person name="Wei X."/>
            <person name="West A."/>
            <person name="Whitehead S.L."/>
            <person name="Whiteley M.N."/>
            <person name="Wilkinson J.E."/>
            <person name="Willey D.L."/>
            <person name="Williams G."/>
            <person name="Williams L."/>
            <person name="Williamson A."/>
            <person name="Williamson H."/>
            <person name="Wilming L."/>
            <person name="Woodmansey R.L."/>
            <person name="Wray P.W."/>
            <person name="Yen J."/>
            <person name="Zhang J."/>
            <person name="Zhou J."/>
            <person name="Zoghbi H."/>
            <person name="Zorilla S."/>
            <person name="Buck D."/>
            <person name="Reinhardt R."/>
            <person name="Poustka A."/>
            <person name="Rosenthal A."/>
            <person name="Lehrach H."/>
            <person name="Meindl A."/>
            <person name="Minx P.J."/>
            <person name="Hillier L.W."/>
            <person name="Willard H.F."/>
            <person name="Wilson R.K."/>
            <person name="Waterston R.H."/>
            <person name="Rice C.M."/>
            <person name="Vaudin M."/>
            <person name="Coulson A."/>
            <person name="Nelson D.L."/>
            <person name="Weinstock G."/>
            <person name="Sulston J.E."/>
            <person name="Durbin R.M."/>
            <person name="Hubbard T."/>
            <person name="Gibbs R.A."/>
            <person name="Beck S."/>
            <person name="Rogers J."/>
            <person name="Bentley D.R."/>
        </authorList>
    </citation>
    <scope>NUCLEOTIDE SEQUENCE [LARGE SCALE GENOMIC DNA]</scope>
</reference>
<reference key="3">
    <citation type="journal article" date="2004" name="Genome Res.">
        <title>The status, quality, and expansion of the NIH full-length cDNA project: the Mammalian Gene Collection (MGC).</title>
        <authorList>
            <consortium name="The MGC Project Team"/>
        </authorList>
    </citation>
    <scope>NUCLEOTIDE SEQUENCE [LARGE SCALE MRNA]</scope>
    <scope>VARIANTS LYS-166 AND ILE-234</scope>
    <source>
        <tissue>Skin</tissue>
    </source>
</reference>
<reference key="4">
    <citation type="journal article" date="2011" name="Int. J. Cancer">
        <title>MAGE-A10 is a nuclear protein frequently expressed in high percentages of tumor cells in lung, skin and urothelial malignancies.</title>
        <authorList>
            <person name="Schultz-Thater E."/>
            <person name="Piscuoglio S."/>
            <person name="Iezzi G."/>
            <person name="Le Magnen C."/>
            <person name="Zajac P."/>
            <person name="Carafa V."/>
            <person name="Terracciano L."/>
            <person name="Tornillo L."/>
            <person name="Spagnoli G.C."/>
        </authorList>
    </citation>
    <scope>SUBCELLULAR LOCATION</scope>
    <scope>TISSUE SPECIFICITY</scope>
</reference>
<feature type="chain" id="PRO_0000156709" description="Melanoma-associated antigen 10">
    <location>
        <begin position="1"/>
        <end position="369"/>
    </location>
</feature>
<feature type="domain" description="MAGE" evidence="1">
    <location>
        <begin position="134"/>
        <end position="333"/>
    </location>
</feature>
<feature type="region of interest" description="Disordered" evidence="2">
    <location>
        <begin position="1"/>
        <end position="131"/>
    </location>
</feature>
<feature type="region of interest" description="Disordered" evidence="2">
    <location>
        <begin position="340"/>
        <end position="369"/>
    </location>
</feature>
<feature type="compositionally biased region" description="Low complexity" evidence="2">
    <location>
        <begin position="39"/>
        <end position="62"/>
    </location>
</feature>
<feature type="compositionally biased region" description="Polar residues" evidence="2">
    <location>
        <begin position="85"/>
        <end position="96"/>
    </location>
</feature>
<feature type="compositionally biased region" description="Polar residues" evidence="2">
    <location>
        <begin position="107"/>
        <end position="121"/>
    </location>
</feature>
<feature type="compositionally biased region" description="Low complexity" evidence="2">
    <location>
        <begin position="348"/>
        <end position="369"/>
    </location>
</feature>
<feature type="sequence variant" id="VAR_024528" description="In dbSNP:rs210585." evidence="3 5">
    <original>R</original>
    <variation>K</variation>
    <location>
        <position position="166"/>
    </location>
</feature>
<feature type="sequence variant" id="VAR_053496" description="In dbSNP:rs210586." evidence="3 5">
    <original>V</original>
    <variation>I</variation>
    <location>
        <position position="234"/>
    </location>
</feature>
<name>MAGAA_HUMAN</name>
<comment type="function">
    <text>Not known, though may play a role in embryonal development and tumor transformation or aspects of tumor progression.</text>
</comment>
<comment type="subcellular location">
    <subcellularLocation>
        <location evidence="4">Nucleus</location>
    </subcellularLocation>
</comment>
<comment type="tissue specificity">
    <text evidence="4">Expressed in many tumors of several types, such as melanoma, head and neck squamous cell carcinoma, lung carcinoma and breast carcinoma, but not in normal tissues except for spermatogonia, spermatocytes and placenta.</text>
</comment>
<proteinExistence type="evidence at protein level"/>
<evidence type="ECO:0000255" key="1">
    <source>
        <dbReference type="PROSITE-ProRule" id="PRU00127"/>
    </source>
</evidence>
<evidence type="ECO:0000256" key="2">
    <source>
        <dbReference type="SAM" id="MobiDB-lite"/>
    </source>
</evidence>
<evidence type="ECO:0000269" key="3">
    <source>
    </source>
</evidence>
<evidence type="ECO:0000269" key="4">
    <source>
    </source>
</evidence>
<evidence type="ECO:0000269" key="5">
    <source>
    </source>
</evidence>